<organism>
    <name type="scientific">Rickettsia bellii (strain RML369-C)</name>
    <dbReference type="NCBI Taxonomy" id="336407"/>
    <lineage>
        <taxon>Bacteria</taxon>
        <taxon>Pseudomonadati</taxon>
        <taxon>Pseudomonadota</taxon>
        <taxon>Alphaproteobacteria</taxon>
        <taxon>Rickettsiales</taxon>
        <taxon>Rickettsiaceae</taxon>
        <taxon>Rickettsieae</taxon>
        <taxon>Rickettsia</taxon>
        <taxon>belli group</taxon>
    </lineage>
</organism>
<feature type="chain" id="PRO_0000288095" description="Dihydrolipoyllysine-residue succinyltransferase component of 2-oxoglutarate dehydrogenase complex">
    <location>
        <begin position="1"/>
        <end position="400"/>
    </location>
</feature>
<feature type="domain" description="Lipoyl-binding" evidence="3">
    <location>
        <begin position="2"/>
        <end position="77"/>
    </location>
</feature>
<feature type="domain" description="Peripheral subunit-binding (PSBD)" evidence="4">
    <location>
        <begin position="113"/>
        <end position="150"/>
    </location>
</feature>
<feature type="region of interest" description="Disordered" evidence="5">
    <location>
        <begin position="85"/>
        <end position="113"/>
    </location>
</feature>
<feature type="compositionally biased region" description="Polar residues" evidence="5">
    <location>
        <begin position="85"/>
        <end position="97"/>
    </location>
</feature>
<feature type="active site" evidence="2">
    <location>
        <position position="371"/>
    </location>
</feature>
<feature type="active site" evidence="2">
    <location>
        <position position="375"/>
    </location>
</feature>
<feature type="modified residue" description="N6-lipoyllysine" evidence="3">
    <location>
        <position position="43"/>
    </location>
</feature>
<name>ODO2_RICBR</name>
<sequence length="400" mass="43078">MGVKIIVPSLGESVTEATIAKWYKKEGDAVKTDELLLEIETEKVTLEVNSPCNGTIGKIIKADGANVAVGEEIGDINEGEAVATNSNEAAKPQTASQPVPEKVPKKPAVANNTLAPSVQKLVTENKLDPNNIKGTGKDGRITKGDVLETMNAPTPAATSTTSSAKASEERVERVRMSRLRKTIAQRLKDSQNTAAILTTFNEIDMSKVIALRGKYKDEFEKKHGVKLGFMSFFVRATIEALKLIPSVNAEIDGDDLVYKNYYDIGVAVGTEQGLVVPVVRDADKMGFADIEKTIGGLAKKARDGKLSMADLSGGTFSISNGGVYGSLLSTPIINPPQSGILGLHKTEERVVAIDGKIEIRPMMYIALSYDHRIIDGKEAVSFLVKIKELIESPEKLLLNL</sequence>
<evidence type="ECO:0000250" key="1"/>
<evidence type="ECO:0000250" key="2">
    <source>
        <dbReference type="UniProtKB" id="P0AFG6"/>
    </source>
</evidence>
<evidence type="ECO:0000255" key="3">
    <source>
        <dbReference type="PROSITE-ProRule" id="PRU01066"/>
    </source>
</evidence>
<evidence type="ECO:0000255" key="4">
    <source>
        <dbReference type="PROSITE-ProRule" id="PRU01170"/>
    </source>
</evidence>
<evidence type="ECO:0000256" key="5">
    <source>
        <dbReference type="SAM" id="MobiDB-lite"/>
    </source>
</evidence>
<evidence type="ECO:0000305" key="6"/>
<reference key="1">
    <citation type="journal article" date="2006" name="PLoS Genet.">
        <title>Genome sequence of Rickettsia bellii illuminates the role of amoebae in gene exchanges between intracellular pathogens.</title>
        <authorList>
            <person name="Ogata H."/>
            <person name="La Scola B."/>
            <person name="Audic S."/>
            <person name="Renesto P."/>
            <person name="Blanc G."/>
            <person name="Robert C."/>
            <person name="Fournier P.-E."/>
            <person name="Claverie J.-M."/>
            <person name="Raoult D."/>
        </authorList>
    </citation>
    <scope>NUCLEOTIDE SEQUENCE [LARGE SCALE GENOMIC DNA]</scope>
    <source>
        <strain>RML369-C</strain>
    </source>
</reference>
<comment type="function">
    <text evidence="2">E2 component of the 2-oxoglutarate dehydrogenase (OGDH) complex which catalyzes the second step in the conversion of 2-oxoglutarate to succinyl-CoA and CO(2).</text>
</comment>
<comment type="catalytic activity">
    <reaction evidence="2">
        <text>N(6)-[(R)-dihydrolipoyl]-L-lysyl-[protein] + succinyl-CoA = N(6)-[(R)-S(8)-succinyldihydrolipoyl]-L-lysyl-[protein] + CoA</text>
        <dbReference type="Rhea" id="RHEA:15213"/>
        <dbReference type="Rhea" id="RHEA-COMP:10475"/>
        <dbReference type="Rhea" id="RHEA-COMP:20092"/>
        <dbReference type="ChEBI" id="CHEBI:57287"/>
        <dbReference type="ChEBI" id="CHEBI:57292"/>
        <dbReference type="ChEBI" id="CHEBI:83100"/>
        <dbReference type="ChEBI" id="CHEBI:83120"/>
        <dbReference type="EC" id="2.3.1.61"/>
    </reaction>
</comment>
<comment type="cofactor">
    <cofactor evidence="1">
        <name>(R)-lipoate</name>
        <dbReference type="ChEBI" id="CHEBI:83088"/>
    </cofactor>
    <text evidence="1">Binds 1 lipoyl cofactor covalently.</text>
</comment>
<comment type="pathway">
    <text>Amino-acid degradation; L-lysine degradation via saccharopine pathway; glutaryl-CoA from L-lysine: step 6/6.</text>
</comment>
<comment type="subunit">
    <text evidence="2">Forms a 24-polypeptide structural core with octahedral symmetry. Part of the 2-oxoglutarate dehydrogenase (OGDH) complex composed of E1 (2-oxoglutarate dehydrogenase), E2 (dihydrolipoamide succinyltransferase) and E3 (dihydrolipoamide dehydrogenase); the complex contains multiple copies of the three enzymatic components (E1, E2 and E3).</text>
</comment>
<comment type="similarity">
    <text evidence="6">Belongs to the 2-oxoacid dehydrogenase family.</text>
</comment>
<proteinExistence type="inferred from homology"/>
<gene>
    <name type="primary">sucB</name>
    <name type="ordered locus">RBE_1098</name>
</gene>
<protein>
    <recommendedName>
        <fullName>Dihydrolipoyllysine-residue succinyltransferase component of 2-oxoglutarate dehydrogenase complex</fullName>
        <ecNumber evidence="2">2.3.1.61</ecNumber>
    </recommendedName>
    <alternativeName>
        <fullName>2-oxoglutarate dehydrogenase complex component E2</fullName>
        <shortName>OGDC-E2</shortName>
    </alternativeName>
    <alternativeName>
        <fullName>Dihydrolipoamide succinyltransferase component of 2-oxoglutarate dehydrogenase complex</fullName>
    </alternativeName>
</protein>
<dbReference type="EC" id="2.3.1.61" evidence="2"/>
<dbReference type="EMBL" id="CP000087">
    <property type="protein sequence ID" value="ABE05179.1"/>
    <property type="molecule type" value="Genomic_DNA"/>
</dbReference>
<dbReference type="RefSeq" id="WP_011477757.1">
    <property type="nucleotide sequence ID" value="NC_007940.1"/>
</dbReference>
<dbReference type="SMR" id="Q1RHI5"/>
<dbReference type="KEGG" id="rbe:RBE_1098"/>
<dbReference type="eggNOG" id="COG0508">
    <property type="taxonomic scope" value="Bacteria"/>
</dbReference>
<dbReference type="HOGENOM" id="CLU_016733_0_0_5"/>
<dbReference type="OrthoDB" id="9805770at2"/>
<dbReference type="UniPathway" id="UPA00868">
    <property type="reaction ID" value="UER00840"/>
</dbReference>
<dbReference type="Proteomes" id="UP000001951">
    <property type="component" value="Chromosome"/>
</dbReference>
<dbReference type="GO" id="GO:0005829">
    <property type="term" value="C:cytosol"/>
    <property type="evidence" value="ECO:0007669"/>
    <property type="project" value="TreeGrafter"/>
</dbReference>
<dbReference type="GO" id="GO:0045252">
    <property type="term" value="C:oxoglutarate dehydrogenase complex"/>
    <property type="evidence" value="ECO:0007669"/>
    <property type="project" value="InterPro"/>
</dbReference>
<dbReference type="GO" id="GO:0004149">
    <property type="term" value="F:dihydrolipoyllysine-residue succinyltransferase activity"/>
    <property type="evidence" value="ECO:0007669"/>
    <property type="project" value="UniProtKB-EC"/>
</dbReference>
<dbReference type="GO" id="GO:0033512">
    <property type="term" value="P:L-lysine catabolic process to acetyl-CoA via saccharopine"/>
    <property type="evidence" value="ECO:0007669"/>
    <property type="project" value="UniProtKB-UniPathway"/>
</dbReference>
<dbReference type="GO" id="GO:0006099">
    <property type="term" value="P:tricarboxylic acid cycle"/>
    <property type="evidence" value="ECO:0007669"/>
    <property type="project" value="UniProtKB-KW"/>
</dbReference>
<dbReference type="CDD" id="cd06849">
    <property type="entry name" value="lipoyl_domain"/>
    <property type="match status" value="1"/>
</dbReference>
<dbReference type="FunFam" id="3.30.559.10:FF:000007">
    <property type="entry name" value="Dihydrolipoamide acetyltransferase component of pyruvate dehydrogenase complex"/>
    <property type="match status" value="1"/>
</dbReference>
<dbReference type="Gene3D" id="2.40.50.100">
    <property type="match status" value="1"/>
</dbReference>
<dbReference type="Gene3D" id="3.30.559.10">
    <property type="entry name" value="Chloramphenicol acetyltransferase-like domain"/>
    <property type="match status" value="1"/>
</dbReference>
<dbReference type="Gene3D" id="4.10.320.10">
    <property type="entry name" value="E3-binding domain"/>
    <property type="match status" value="1"/>
</dbReference>
<dbReference type="InterPro" id="IPR003016">
    <property type="entry name" value="2-oxoA_DH_lipoyl-BS"/>
</dbReference>
<dbReference type="InterPro" id="IPR050537">
    <property type="entry name" value="2-oxoacid_dehydrogenase"/>
</dbReference>
<dbReference type="InterPro" id="IPR001078">
    <property type="entry name" value="2-oxoacid_DH_actylTfrase"/>
</dbReference>
<dbReference type="InterPro" id="IPR000089">
    <property type="entry name" value="Biotin_lipoyl"/>
</dbReference>
<dbReference type="InterPro" id="IPR023213">
    <property type="entry name" value="CAT-like_dom_sf"/>
</dbReference>
<dbReference type="InterPro" id="IPR036625">
    <property type="entry name" value="E3-bd_dom_sf"/>
</dbReference>
<dbReference type="InterPro" id="IPR004167">
    <property type="entry name" value="PSBD"/>
</dbReference>
<dbReference type="InterPro" id="IPR011053">
    <property type="entry name" value="Single_hybrid_motif"/>
</dbReference>
<dbReference type="InterPro" id="IPR006255">
    <property type="entry name" value="SucB"/>
</dbReference>
<dbReference type="NCBIfam" id="NF004309">
    <property type="entry name" value="PRK05704.1"/>
    <property type="match status" value="1"/>
</dbReference>
<dbReference type="NCBIfam" id="TIGR01347">
    <property type="entry name" value="sucB"/>
    <property type="match status" value="1"/>
</dbReference>
<dbReference type="PANTHER" id="PTHR43416:SF5">
    <property type="entry name" value="DIHYDROLIPOYLLYSINE-RESIDUE SUCCINYLTRANSFERASE COMPONENT OF 2-OXOGLUTARATE DEHYDROGENASE COMPLEX, MITOCHONDRIAL"/>
    <property type="match status" value="1"/>
</dbReference>
<dbReference type="PANTHER" id="PTHR43416">
    <property type="entry name" value="DIHYDROLIPOYLLYSINE-RESIDUE SUCCINYLTRANSFERASE COMPONENT OF 2-OXOGLUTARATE DEHYDROGENASE COMPLEX, MITOCHONDRIAL-RELATED"/>
    <property type="match status" value="1"/>
</dbReference>
<dbReference type="Pfam" id="PF00198">
    <property type="entry name" value="2-oxoacid_dh"/>
    <property type="match status" value="1"/>
</dbReference>
<dbReference type="Pfam" id="PF00364">
    <property type="entry name" value="Biotin_lipoyl"/>
    <property type="match status" value="1"/>
</dbReference>
<dbReference type="Pfam" id="PF02817">
    <property type="entry name" value="E3_binding"/>
    <property type="match status" value="1"/>
</dbReference>
<dbReference type="SUPFAM" id="SSF52777">
    <property type="entry name" value="CoA-dependent acyltransferases"/>
    <property type="match status" value="1"/>
</dbReference>
<dbReference type="SUPFAM" id="SSF47005">
    <property type="entry name" value="Peripheral subunit-binding domain of 2-oxo acid dehydrogenase complex"/>
    <property type="match status" value="1"/>
</dbReference>
<dbReference type="SUPFAM" id="SSF51230">
    <property type="entry name" value="Single hybrid motif"/>
    <property type="match status" value="1"/>
</dbReference>
<dbReference type="PROSITE" id="PS50968">
    <property type="entry name" value="BIOTINYL_LIPOYL"/>
    <property type="match status" value="1"/>
</dbReference>
<dbReference type="PROSITE" id="PS00189">
    <property type="entry name" value="LIPOYL"/>
    <property type="match status" value="1"/>
</dbReference>
<dbReference type="PROSITE" id="PS51826">
    <property type="entry name" value="PSBD"/>
    <property type="match status" value="1"/>
</dbReference>
<keyword id="KW-0012">Acyltransferase</keyword>
<keyword id="KW-0450">Lipoyl</keyword>
<keyword id="KW-0808">Transferase</keyword>
<keyword id="KW-0816">Tricarboxylic acid cycle</keyword>
<accession>Q1RHI5</accession>